<comment type="function">
    <text evidence="1">Part of an ABC transporter complex involved in carbohydrate import. Could be involved in ribose, galactose and/or methyl galactoside import. Responsible for energy coupling to the transport system.</text>
</comment>
<comment type="catalytic activity">
    <reaction evidence="1">
        <text>D-ribose(out) + ATP + H2O = D-ribose(in) + ADP + phosphate + H(+)</text>
        <dbReference type="Rhea" id="RHEA:29903"/>
        <dbReference type="ChEBI" id="CHEBI:15377"/>
        <dbReference type="ChEBI" id="CHEBI:15378"/>
        <dbReference type="ChEBI" id="CHEBI:30616"/>
        <dbReference type="ChEBI" id="CHEBI:43474"/>
        <dbReference type="ChEBI" id="CHEBI:47013"/>
        <dbReference type="ChEBI" id="CHEBI:456216"/>
        <dbReference type="EC" id="7.5.2.7"/>
    </reaction>
</comment>
<comment type="catalytic activity">
    <reaction evidence="1">
        <text>D-galactose(out) + ATP + H2O = D-galactose(in) + ADP + phosphate + H(+)</text>
        <dbReference type="Rhea" id="RHEA:60156"/>
        <dbReference type="ChEBI" id="CHEBI:4139"/>
        <dbReference type="ChEBI" id="CHEBI:15377"/>
        <dbReference type="ChEBI" id="CHEBI:15378"/>
        <dbReference type="ChEBI" id="CHEBI:30616"/>
        <dbReference type="ChEBI" id="CHEBI:43474"/>
        <dbReference type="ChEBI" id="CHEBI:456216"/>
        <dbReference type="EC" id="7.5.2.11"/>
    </reaction>
</comment>
<comment type="subcellular location">
    <subcellularLocation>
        <location evidence="1">Cell inner membrane</location>
        <topology evidence="1">Peripheral membrane protein</topology>
    </subcellularLocation>
</comment>
<comment type="similarity">
    <text evidence="1">Belongs to the ABC transporter superfamily. Carbohydrate importer 2 (CUT2) (TC 3.A.1.2) family.</text>
</comment>
<evidence type="ECO:0000255" key="1">
    <source>
        <dbReference type="HAMAP-Rule" id="MF_01717"/>
    </source>
</evidence>
<accession>Q0B775</accession>
<keyword id="KW-0067">ATP-binding</keyword>
<keyword id="KW-0997">Cell inner membrane</keyword>
<keyword id="KW-1003">Cell membrane</keyword>
<keyword id="KW-0472">Membrane</keyword>
<keyword id="KW-0547">Nucleotide-binding</keyword>
<keyword id="KW-0677">Repeat</keyword>
<keyword id="KW-0762">Sugar transport</keyword>
<keyword id="KW-1278">Translocase</keyword>
<keyword id="KW-0813">Transport</keyword>
<protein>
    <recommendedName>
        <fullName evidence="1">Putative ribose/galactose/methyl galactoside import ATP-binding protein 3</fullName>
        <ecNumber evidence="1">7.5.2.11</ecNumber>
        <ecNumber evidence="1">7.5.2.7</ecNumber>
    </recommendedName>
</protein>
<sequence>MQPDPNPAAAPAALIELTGVSKRFPGVQALDDCRFDLRAGEVHALMGENGAGKSTLMKILAGVYQKDGGEIRMDGRAVEIDDPRAAQALGIGIIHQELNLMNHLSVAQNIFIGREPRGRFGVFVDEDKLNRDAAAIFARMRLDLDPRTLVGRLTVAKQQMVEIAKALSFDSRVLIMDEPTAALNNAEIAELFRIIGELRAHGVGIVYISHKMDELRQIADRVTVMRDGKYVATVPMAGTSMDAIIAMMVGRQLDTEFRTPPDTSANDVALEVRGLSRGRAIRDVGFTLRRGEILGFAGLMGAGRTEVARAVFGADPVDAGEIRVHGKTVTIRTPADAVAHGIGYLSEDRKHFGLAVGMDVQNNIALSSMRRFVRRGLFLDARQMRDTAQSYVRQLAIRTPSVAQPARLLSGGNQQKIVIAKWLLRDCDILFFDEPTRGIDVGAKSEIYKLLDALAAEGKAIVMISSELPEVLRMSHRILVMCEGRVTGELRAADATQEKIMQLATQRESTVLS</sequence>
<dbReference type="EC" id="7.5.2.11" evidence="1"/>
<dbReference type="EC" id="7.5.2.7" evidence="1"/>
<dbReference type="EMBL" id="CP000441">
    <property type="protein sequence ID" value="ABI89998.1"/>
    <property type="molecule type" value="Genomic_DNA"/>
</dbReference>
<dbReference type="RefSeq" id="WP_011659425.1">
    <property type="nucleotide sequence ID" value="NC_008391.1"/>
</dbReference>
<dbReference type="SMR" id="Q0B775"/>
<dbReference type="GeneID" id="93087407"/>
<dbReference type="KEGG" id="bam:Bamb_4447"/>
<dbReference type="PATRIC" id="fig|339670.21.peg.4772"/>
<dbReference type="eggNOG" id="COG1129">
    <property type="taxonomic scope" value="Bacteria"/>
</dbReference>
<dbReference type="Proteomes" id="UP000000662">
    <property type="component" value="Chromosome 2"/>
</dbReference>
<dbReference type="GO" id="GO:0005886">
    <property type="term" value="C:plasma membrane"/>
    <property type="evidence" value="ECO:0007669"/>
    <property type="project" value="UniProtKB-SubCell"/>
</dbReference>
<dbReference type="GO" id="GO:0015611">
    <property type="term" value="F:ABC-type D-ribose transporter activity"/>
    <property type="evidence" value="ECO:0007669"/>
    <property type="project" value="UniProtKB-EC"/>
</dbReference>
<dbReference type="GO" id="GO:0005524">
    <property type="term" value="F:ATP binding"/>
    <property type="evidence" value="ECO:0007669"/>
    <property type="project" value="UniProtKB-KW"/>
</dbReference>
<dbReference type="GO" id="GO:0016887">
    <property type="term" value="F:ATP hydrolysis activity"/>
    <property type="evidence" value="ECO:0007669"/>
    <property type="project" value="InterPro"/>
</dbReference>
<dbReference type="CDD" id="cd03216">
    <property type="entry name" value="ABC_Carb_Monos_I"/>
    <property type="match status" value="1"/>
</dbReference>
<dbReference type="CDD" id="cd03215">
    <property type="entry name" value="ABC_Carb_Monos_II"/>
    <property type="match status" value="1"/>
</dbReference>
<dbReference type="FunFam" id="3.40.50.300:FF:000126">
    <property type="entry name" value="Galactose/methyl galactoside import ATP-binding protein MglA"/>
    <property type="match status" value="1"/>
</dbReference>
<dbReference type="FunFam" id="3.40.50.300:FF:000127">
    <property type="entry name" value="Ribose import ATP-binding protein RbsA"/>
    <property type="match status" value="1"/>
</dbReference>
<dbReference type="Gene3D" id="3.40.50.300">
    <property type="entry name" value="P-loop containing nucleotide triphosphate hydrolases"/>
    <property type="match status" value="2"/>
</dbReference>
<dbReference type="InterPro" id="IPR003593">
    <property type="entry name" value="AAA+_ATPase"/>
</dbReference>
<dbReference type="InterPro" id="IPR050107">
    <property type="entry name" value="ABC_carbohydrate_import_ATPase"/>
</dbReference>
<dbReference type="InterPro" id="IPR003439">
    <property type="entry name" value="ABC_transporter-like_ATP-bd"/>
</dbReference>
<dbReference type="InterPro" id="IPR017871">
    <property type="entry name" value="ABC_transporter-like_CS"/>
</dbReference>
<dbReference type="InterPro" id="IPR027417">
    <property type="entry name" value="P-loop_NTPase"/>
</dbReference>
<dbReference type="PANTHER" id="PTHR43790">
    <property type="entry name" value="CARBOHYDRATE TRANSPORT ATP-BINDING PROTEIN MG119-RELATED"/>
    <property type="match status" value="1"/>
</dbReference>
<dbReference type="PANTHER" id="PTHR43790:SF3">
    <property type="entry name" value="D-ALLOSE IMPORT ATP-BINDING PROTEIN ALSA-RELATED"/>
    <property type="match status" value="1"/>
</dbReference>
<dbReference type="Pfam" id="PF00005">
    <property type="entry name" value="ABC_tran"/>
    <property type="match status" value="2"/>
</dbReference>
<dbReference type="SMART" id="SM00382">
    <property type="entry name" value="AAA"/>
    <property type="match status" value="2"/>
</dbReference>
<dbReference type="SUPFAM" id="SSF52540">
    <property type="entry name" value="P-loop containing nucleoside triphosphate hydrolases"/>
    <property type="match status" value="2"/>
</dbReference>
<dbReference type="PROSITE" id="PS00211">
    <property type="entry name" value="ABC_TRANSPORTER_1"/>
    <property type="match status" value="1"/>
</dbReference>
<dbReference type="PROSITE" id="PS50893">
    <property type="entry name" value="ABC_TRANSPORTER_2"/>
    <property type="match status" value="2"/>
</dbReference>
<dbReference type="PROSITE" id="PS51260">
    <property type="entry name" value="MGLA"/>
    <property type="match status" value="1"/>
</dbReference>
<dbReference type="PROSITE" id="PS51254">
    <property type="entry name" value="RBSA"/>
    <property type="match status" value="1"/>
</dbReference>
<reference key="1">
    <citation type="submission" date="2006-08" db="EMBL/GenBank/DDBJ databases">
        <title>Complete sequence of chromosome 2 of Burkholderia cepacia AMMD.</title>
        <authorList>
            <person name="Copeland A."/>
            <person name="Lucas S."/>
            <person name="Lapidus A."/>
            <person name="Barry K."/>
            <person name="Detter J.C."/>
            <person name="Glavina del Rio T."/>
            <person name="Hammon N."/>
            <person name="Israni S."/>
            <person name="Pitluck S."/>
            <person name="Bruce D."/>
            <person name="Chain P."/>
            <person name="Malfatti S."/>
            <person name="Shin M."/>
            <person name="Vergez L."/>
            <person name="Schmutz J."/>
            <person name="Larimer F."/>
            <person name="Land M."/>
            <person name="Hauser L."/>
            <person name="Kyrpides N."/>
            <person name="Kim E."/>
            <person name="Parke J."/>
            <person name="Coenye T."/>
            <person name="Konstantinidis K."/>
            <person name="Ramette A."/>
            <person name="Tiedje J."/>
            <person name="Richardson P."/>
        </authorList>
    </citation>
    <scope>NUCLEOTIDE SEQUENCE [LARGE SCALE GENOMIC DNA]</scope>
    <source>
        <strain>ATCC BAA-244 / DSM 16087 / CCUG 44356 / LMG 19182 / AMMD</strain>
    </source>
</reference>
<organism>
    <name type="scientific">Burkholderia ambifaria (strain ATCC BAA-244 / DSM 16087 / CCUG 44356 / LMG 19182 / AMMD)</name>
    <name type="common">Burkholderia cepacia (strain AMMD)</name>
    <dbReference type="NCBI Taxonomy" id="339670"/>
    <lineage>
        <taxon>Bacteria</taxon>
        <taxon>Pseudomonadati</taxon>
        <taxon>Pseudomonadota</taxon>
        <taxon>Betaproteobacteria</taxon>
        <taxon>Burkholderiales</taxon>
        <taxon>Burkholderiaceae</taxon>
        <taxon>Burkholderia</taxon>
        <taxon>Burkholderia cepacia complex</taxon>
    </lineage>
</organism>
<gene>
    <name type="ordered locus">Bamb_4447</name>
</gene>
<feature type="chain" id="PRO_0000277558" description="Putative ribose/galactose/methyl galactoside import ATP-binding protein 3">
    <location>
        <begin position="1"/>
        <end position="513"/>
    </location>
</feature>
<feature type="domain" description="ABC transporter 1" evidence="1">
    <location>
        <begin position="15"/>
        <end position="252"/>
    </location>
</feature>
<feature type="domain" description="ABC transporter 2" evidence="1">
    <location>
        <begin position="263"/>
        <end position="508"/>
    </location>
</feature>
<feature type="binding site" evidence="1">
    <location>
        <begin position="47"/>
        <end position="54"/>
    </location>
    <ligand>
        <name>ATP</name>
        <dbReference type="ChEBI" id="CHEBI:30616"/>
    </ligand>
</feature>
<name>RGMG3_BURCM</name>
<proteinExistence type="inferred from homology"/>